<protein>
    <recommendedName>
        <fullName evidence="1">Probable tRNA sulfurtransferase</fullName>
        <ecNumber evidence="1">2.8.1.4</ecNumber>
    </recommendedName>
    <alternativeName>
        <fullName evidence="1">Sulfur carrier protein ThiS sulfurtransferase</fullName>
    </alternativeName>
    <alternativeName>
        <fullName evidence="1">Thiamine biosynthesis protein ThiI</fullName>
    </alternativeName>
    <alternativeName>
        <fullName evidence="1">tRNA 4-thiouridine synthase</fullName>
    </alternativeName>
</protein>
<proteinExistence type="evidence at protein level"/>
<feature type="chain" id="PRO_0000154880" description="Probable tRNA sulfurtransferase">
    <location>
        <begin position="1"/>
        <end position="388"/>
    </location>
</feature>
<feature type="domain" description="THUMP" evidence="1">
    <location>
        <begin position="55"/>
        <end position="162"/>
    </location>
</feature>
<feature type="binding site" evidence="1">
    <location>
        <begin position="180"/>
        <end position="181"/>
    </location>
    <ligand>
        <name>ATP</name>
        <dbReference type="ChEBI" id="CHEBI:30616"/>
    </ligand>
</feature>
<feature type="binding site" evidence="1">
    <location>
        <begin position="205"/>
        <end position="206"/>
    </location>
    <ligand>
        <name>ATP</name>
        <dbReference type="ChEBI" id="CHEBI:30616"/>
    </ligand>
</feature>
<feature type="binding site" evidence="1">
    <location>
        <position position="264"/>
    </location>
    <ligand>
        <name>ATP</name>
        <dbReference type="ChEBI" id="CHEBI:30616"/>
    </ligand>
</feature>
<feature type="binding site" evidence="1">
    <location>
        <position position="286"/>
    </location>
    <ligand>
        <name>ATP</name>
        <dbReference type="ChEBI" id="CHEBI:30616"/>
    </ligand>
</feature>
<feature type="binding site" evidence="1">
    <location>
        <position position="295"/>
    </location>
    <ligand>
        <name>ATP</name>
        <dbReference type="ChEBI" id="CHEBI:30616"/>
    </ligand>
</feature>
<feature type="strand" evidence="2">
    <location>
        <begin position="4"/>
        <end position="10"/>
    </location>
</feature>
<feature type="helix" evidence="2">
    <location>
        <begin position="12"/>
        <end position="14"/>
    </location>
</feature>
<feature type="helix" evidence="2">
    <location>
        <begin position="21"/>
        <end position="36"/>
    </location>
</feature>
<feature type="strand" evidence="2">
    <location>
        <begin position="41"/>
        <end position="43"/>
    </location>
</feature>
<feature type="strand" evidence="2">
    <location>
        <begin position="46"/>
        <end position="50"/>
    </location>
</feature>
<feature type="helix" evidence="2">
    <location>
        <begin position="58"/>
        <end position="61"/>
    </location>
</feature>
<feature type="strand" evidence="2">
    <location>
        <begin position="69"/>
        <end position="76"/>
    </location>
</feature>
<feature type="helix" evidence="2">
    <location>
        <begin position="80"/>
        <end position="95"/>
    </location>
</feature>
<feature type="strand" evidence="2">
    <location>
        <begin position="102"/>
        <end position="111"/>
    </location>
</feature>
<feature type="strand" evidence="3">
    <location>
        <begin position="114"/>
        <end position="116"/>
    </location>
</feature>
<feature type="helix" evidence="2">
    <location>
        <begin position="118"/>
        <end position="132"/>
    </location>
</feature>
<feature type="strand" evidence="2">
    <location>
        <begin position="140"/>
        <end position="142"/>
    </location>
</feature>
<feature type="strand" evidence="2">
    <location>
        <begin position="144"/>
        <end position="152"/>
    </location>
</feature>
<feature type="strand" evidence="2">
    <location>
        <begin position="155"/>
        <end position="162"/>
    </location>
</feature>
<feature type="strand" evidence="2">
    <location>
        <begin position="176"/>
        <end position="180"/>
    </location>
</feature>
<feature type="strand" evidence="2">
    <location>
        <begin position="183"/>
        <end position="185"/>
    </location>
</feature>
<feature type="helix" evidence="2">
    <location>
        <begin position="186"/>
        <end position="196"/>
    </location>
</feature>
<feature type="strand" evidence="2">
    <location>
        <begin position="200"/>
        <end position="207"/>
    </location>
</feature>
<feature type="turn" evidence="2">
    <location>
        <begin position="209"/>
        <end position="211"/>
    </location>
</feature>
<feature type="helix" evidence="2">
    <location>
        <begin position="216"/>
        <end position="227"/>
    </location>
</feature>
<feature type="helix" evidence="2">
    <location>
        <begin position="228"/>
        <end position="230"/>
    </location>
</feature>
<feature type="turn" evidence="3">
    <location>
        <begin position="231"/>
        <end position="233"/>
    </location>
</feature>
<feature type="strand" evidence="2">
    <location>
        <begin position="236"/>
        <end position="242"/>
    </location>
</feature>
<feature type="helix" evidence="2">
    <location>
        <begin position="244"/>
        <end position="253"/>
    </location>
</feature>
<feature type="helix" evidence="2">
    <location>
        <begin position="256"/>
        <end position="258"/>
    </location>
</feature>
<feature type="helix" evidence="2">
    <location>
        <begin position="259"/>
        <end position="278"/>
    </location>
</feature>
<feature type="strand" evidence="3">
    <location>
        <begin position="282"/>
        <end position="284"/>
    </location>
</feature>
<feature type="strand" evidence="3">
    <location>
        <begin position="289"/>
        <end position="292"/>
    </location>
</feature>
<feature type="helix" evidence="2">
    <location>
        <begin position="293"/>
        <end position="295"/>
    </location>
</feature>
<feature type="helix" evidence="2">
    <location>
        <begin position="297"/>
        <end position="304"/>
    </location>
</feature>
<feature type="turn" evidence="2">
    <location>
        <begin position="314"/>
        <end position="317"/>
    </location>
</feature>
<feature type="helix" evidence="2">
    <location>
        <begin position="320"/>
        <end position="329"/>
    </location>
</feature>
<feature type="turn" evidence="2">
    <location>
        <begin position="333"/>
        <end position="335"/>
    </location>
</feature>
<feature type="strand" evidence="2">
    <location>
        <begin position="346"/>
        <end position="348"/>
    </location>
</feature>
<feature type="helix" evidence="2">
    <location>
        <begin position="358"/>
        <end position="364"/>
    </location>
</feature>
<feature type="helix" evidence="2">
    <location>
        <begin position="365"/>
        <end position="367"/>
    </location>
</feature>
<feature type="helix" evidence="2">
    <location>
        <begin position="371"/>
        <end position="380"/>
    </location>
</feature>
<feature type="strand" evidence="2">
    <location>
        <begin position="383"/>
        <end position="387"/>
    </location>
</feature>
<keyword id="KW-0002">3D-structure</keyword>
<keyword id="KW-0067">ATP-binding</keyword>
<keyword id="KW-0963">Cytoplasm</keyword>
<keyword id="KW-0547">Nucleotide-binding</keyword>
<keyword id="KW-1185">Reference proteome</keyword>
<keyword id="KW-0694">RNA-binding</keyword>
<keyword id="KW-0784">Thiamine biosynthesis</keyword>
<keyword id="KW-0808">Transferase</keyword>
<keyword id="KW-0820">tRNA-binding</keyword>
<dbReference type="EC" id="2.8.1.4" evidence="1"/>
<dbReference type="EMBL" id="AE000512">
    <property type="protein sequence ID" value="AAD36761.1"/>
    <property type="molecule type" value="Genomic_DNA"/>
</dbReference>
<dbReference type="PIR" id="H72223">
    <property type="entry name" value="H72223"/>
</dbReference>
<dbReference type="RefSeq" id="NP_229494.1">
    <property type="nucleotide sequence ID" value="NC_000853.1"/>
</dbReference>
<dbReference type="PDB" id="4KR6">
    <property type="method" value="X-ray"/>
    <property type="resolution" value="2.85 A"/>
    <property type="chains" value="A/B=1-388"/>
</dbReference>
<dbReference type="PDB" id="4KR7">
    <property type="method" value="X-ray"/>
    <property type="resolution" value="3.42 A"/>
    <property type="chains" value="A/B=1-388"/>
</dbReference>
<dbReference type="PDB" id="4KR9">
    <property type="method" value="X-ray"/>
    <property type="resolution" value="3.50 A"/>
    <property type="chains" value="A/B=1-388"/>
</dbReference>
<dbReference type="PDBsum" id="4KR6"/>
<dbReference type="PDBsum" id="4KR7"/>
<dbReference type="PDBsum" id="4KR9"/>
<dbReference type="SMR" id="Q9X220"/>
<dbReference type="FunCoup" id="Q9X220">
    <property type="interactions" value="95"/>
</dbReference>
<dbReference type="STRING" id="243274.TM_1694"/>
<dbReference type="PaxDb" id="243274-THEMA_05770"/>
<dbReference type="EnsemblBacteria" id="AAD36761">
    <property type="protein sequence ID" value="AAD36761"/>
    <property type="gene ID" value="TM_1694"/>
</dbReference>
<dbReference type="KEGG" id="tma:TM1694"/>
<dbReference type="KEGG" id="tmi:THEMA_05770"/>
<dbReference type="PATRIC" id="fig|243274.18.peg.1115"/>
<dbReference type="eggNOG" id="COG0301">
    <property type="taxonomic scope" value="Bacteria"/>
</dbReference>
<dbReference type="InParanoid" id="Q9X220"/>
<dbReference type="OrthoDB" id="9773948at2"/>
<dbReference type="BRENDA" id="2.8.1.B3">
    <property type="organism ID" value="6331"/>
</dbReference>
<dbReference type="UniPathway" id="UPA00060"/>
<dbReference type="EvolutionaryTrace" id="Q9X220"/>
<dbReference type="Proteomes" id="UP000008183">
    <property type="component" value="Chromosome"/>
</dbReference>
<dbReference type="GO" id="GO:0005829">
    <property type="term" value="C:cytosol"/>
    <property type="evidence" value="ECO:0000318"/>
    <property type="project" value="GO_Central"/>
</dbReference>
<dbReference type="GO" id="GO:0005524">
    <property type="term" value="F:ATP binding"/>
    <property type="evidence" value="ECO:0007669"/>
    <property type="project" value="UniProtKB-UniRule"/>
</dbReference>
<dbReference type="GO" id="GO:0004810">
    <property type="term" value="F:CCA tRNA nucleotidyltransferase activity"/>
    <property type="evidence" value="ECO:0007669"/>
    <property type="project" value="InterPro"/>
</dbReference>
<dbReference type="GO" id="GO:0000049">
    <property type="term" value="F:tRNA binding"/>
    <property type="evidence" value="ECO:0007669"/>
    <property type="project" value="UniProtKB-UniRule"/>
</dbReference>
<dbReference type="GO" id="GO:0140741">
    <property type="term" value="F:tRNA-uracil-4 sulfurtransferase activity"/>
    <property type="evidence" value="ECO:0007669"/>
    <property type="project" value="UniProtKB-EC"/>
</dbReference>
<dbReference type="GO" id="GO:0009228">
    <property type="term" value="P:thiamine biosynthetic process"/>
    <property type="evidence" value="ECO:0007669"/>
    <property type="project" value="UniProtKB-KW"/>
</dbReference>
<dbReference type="GO" id="GO:0009229">
    <property type="term" value="P:thiamine diphosphate biosynthetic process"/>
    <property type="evidence" value="ECO:0007669"/>
    <property type="project" value="UniProtKB-UniRule"/>
</dbReference>
<dbReference type="GO" id="GO:0052837">
    <property type="term" value="P:thiazole biosynthetic process"/>
    <property type="evidence" value="ECO:0000318"/>
    <property type="project" value="GO_Central"/>
</dbReference>
<dbReference type="GO" id="GO:0002937">
    <property type="term" value="P:tRNA 4-thiouridine biosynthesis"/>
    <property type="evidence" value="ECO:0000318"/>
    <property type="project" value="GO_Central"/>
</dbReference>
<dbReference type="CDD" id="cd01712">
    <property type="entry name" value="PPase_ThiI"/>
    <property type="match status" value="1"/>
</dbReference>
<dbReference type="CDD" id="cd11716">
    <property type="entry name" value="THUMP_ThiI"/>
    <property type="match status" value="1"/>
</dbReference>
<dbReference type="FunFam" id="3.40.50.620:FF:000053">
    <property type="entry name" value="Probable tRNA sulfurtransferase"/>
    <property type="match status" value="1"/>
</dbReference>
<dbReference type="Gene3D" id="3.30.2130.30">
    <property type="match status" value="1"/>
</dbReference>
<dbReference type="Gene3D" id="3.40.50.620">
    <property type="entry name" value="HUPs"/>
    <property type="match status" value="1"/>
</dbReference>
<dbReference type="HAMAP" id="MF_00021">
    <property type="entry name" value="ThiI"/>
    <property type="match status" value="1"/>
</dbReference>
<dbReference type="InterPro" id="IPR014729">
    <property type="entry name" value="Rossmann-like_a/b/a_fold"/>
</dbReference>
<dbReference type="InterPro" id="IPR020536">
    <property type="entry name" value="ThiI_AANH"/>
</dbReference>
<dbReference type="InterPro" id="IPR054173">
    <property type="entry name" value="ThiI_fer"/>
</dbReference>
<dbReference type="InterPro" id="IPR049961">
    <property type="entry name" value="ThiI_N"/>
</dbReference>
<dbReference type="InterPro" id="IPR004114">
    <property type="entry name" value="THUMP_dom"/>
</dbReference>
<dbReference type="InterPro" id="IPR049962">
    <property type="entry name" value="THUMP_ThiI"/>
</dbReference>
<dbReference type="InterPro" id="IPR003720">
    <property type="entry name" value="tRNA_STrfase"/>
</dbReference>
<dbReference type="InterPro" id="IPR050102">
    <property type="entry name" value="tRNA_sulfurtransferase_ThiI"/>
</dbReference>
<dbReference type="NCBIfam" id="TIGR00342">
    <property type="entry name" value="tRNA uracil 4-sulfurtransferase ThiI"/>
    <property type="match status" value="1"/>
</dbReference>
<dbReference type="PANTHER" id="PTHR43209">
    <property type="entry name" value="TRNA SULFURTRANSFERASE"/>
    <property type="match status" value="1"/>
</dbReference>
<dbReference type="PANTHER" id="PTHR43209:SF1">
    <property type="entry name" value="TRNA SULFURTRANSFERASE"/>
    <property type="match status" value="1"/>
</dbReference>
<dbReference type="Pfam" id="PF02568">
    <property type="entry name" value="ThiI"/>
    <property type="match status" value="1"/>
</dbReference>
<dbReference type="Pfam" id="PF22025">
    <property type="entry name" value="ThiI_fer"/>
    <property type="match status" value="1"/>
</dbReference>
<dbReference type="Pfam" id="PF02926">
    <property type="entry name" value="THUMP"/>
    <property type="match status" value="1"/>
</dbReference>
<dbReference type="SMART" id="SM00981">
    <property type="entry name" value="THUMP"/>
    <property type="match status" value="1"/>
</dbReference>
<dbReference type="SUPFAM" id="SSF52402">
    <property type="entry name" value="Adenine nucleotide alpha hydrolases-like"/>
    <property type="match status" value="1"/>
</dbReference>
<dbReference type="SUPFAM" id="SSF143437">
    <property type="entry name" value="THUMP domain-like"/>
    <property type="match status" value="1"/>
</dbReference>
<dbReference type="PROSITE" id="PS51165">
    <property type="entry name" value="THUMP"/>
    <property type="match status" value="1"/>
</dbReference>
<name>THII_THEMA</name>
<evidence type="ECO:0000255" key="1">
    <source>
        <dbReference type="HAMAP-Rule" id="MF_00021"/>
    </source>
</evidence>
<evidence type="ECO:0007829" key="2">
    <source>
        <dbReference type="PDB" id="4KR6"/>
    </source>
</evidence>
<evidence type="ECO:0007829" key="3">
    <source>
        <dbReference type="PDB" id="4KR7"/>
    </source>
</evidence>
<accession>Q9X220</accession>
<gene>
    <name evidence="1" type="primary">thiI</name>
    <name type="ordered locus">TM_1694</name>
</gene>
<comment type="function">
    <text evidence="1">Catalyzes the ATP-dependent transfer of a sulfur to tRNA to produce 4-thiouridine in position 8 of tRNAs, which functions as a near-UV photosensor. Also catalyzes the transfer of sulfur to the sulfur carrier protein ThiS, forming ThiS-thiocarboxylate. This is a step in the synthesis of thiazole, in the thiamine biosynthesis pathway. The sulfur is donated as persulfide by IscS.</text>
</comment>
<comment type="catalytic activity">
    <reaction evidence="1">
        <text>[ThiI sulfur-carrier protein]-S-sulfanyl-L-cysteine + a uridine in tRNA + 2 reduced [2Fe-2S]-[ferredoxin] + ATP + H(+) = [ThiI sulfur-carrier protein]-L-cysteine + a 4-thiouridine in tRNA + 2 oxidized [2Fe-2S]-[ferredoxin] + AMP + diphosphate</text>
        <dbReference type="Rhea" id="RHEA:24176"/>
        <dbReference type="Rhea" id="RHEA-COMP:10000"/>
        <dbReference type="Rhea" id="RHEA-COMP:10001"/>
        <dbReference type="Rhea" id="RHEA-COMP:13337"/>
        <dbReference type="Rhea" id="RHEA-COMP:13338"/>
        <dbReference type="Rhea" id="RHEA-COMP:13339"/>
        <dbReference type="Rhea" id="RHEA-COMP:13340"/>
        <dbReference type="ChEBI" id="CHEBI:15378"/>
        <dbReference type="ChEBI" id="CHEBI:29950"/>
        <dbReference type="ChEBI" id="CHEBI:30616"/>
        <dbReference type="ChEBI" id="CHEBI:33019"/>
        <dbReference type="ChEBI" id="CHEBI:33737"/>
        <dbReference type="ChEBI" id="CHEBI:33738"/>
        <dbReference type="ChEBI" id="CHEBI:61963"/>
        <dbReference type="ChEBI" id="CHEBI:65315"/>
        <dbReference type="ChEBI" id="CHEBI:136798"/>
        <dbReference type="ChEBI" id="CHEBI:456215"/>
        <dbReference type="EC" id="2.8.1.4"/>
    </reaction>
</comment>
<comment type="catalytic activity">
    <reaction evidence="1">
        <text>[ThiS sulfur-carrier protein]-C-terminal Gly-Gly-AMP + S-sulfanyl-L-cysteinyl-[cysteine desulfurase] + AH2 = [ThiS sulfur-carrier protein]-C-terminal-Gly-aminoethanethioate + L-cysteinyl-[cysteine desulfurase] + A + AMP + 2 H(+)</text>
        <dbReference type="Rhea" id="RHEA:43340"/>
        <dbReference type="Rhea" id="RHEA-COMP:12157"/>
        <dbReference type="Rhea" id="RHEA-COMP:12158"/>
        <dbReference type="Rhea" id="RHEA-COMP:12910"/>
        <dbReference type="Rhea" id="RHEA-COMP:19908"/>
        <dbReference type="ChEBI" id="CHEBI:13193"/>
        <dbReference type="ChEBI" id="CHEBI:15378"/>
        <dbReference type="ChEBI" id="CHEBI:17499"/>
        <dbReference type="ChEBI" id="CHEBI:29950"/>
        <dbReference type="ChEBI" id="CHEBI:61963"/>
        <dbReference type="ChEBI" id="CHEBI:90618"/>
        <dbReference type="ChEBI" id="CHEBI:232372"/>
        <dbReference type="ChEBI" id="CHEBI:456215"/>
    </reaction>
</comment>
<comment type="pathway">
    <text evidence="1">Cofactor biosynthesis; thiamine diphosphate biosynthesis.</text>
</comment>
<comment type="subcellular location">
    <subcellularLocation>
        <location evidence="1">Cytoplasm</location>
    </subcellularLocation>
</comment>
<comment type="similarity">
    <text evidence="1">Belongs to the ThiI family.</text>
</comment>
<sequence length="388" mass="44126">MKELRVYIVRYSEIGLKGKNRKDFEEALRRNIERVTGMKVKRQWGRFLIPIDENVTLDDKLKKIFGIQNFSKGFLVSHDFEEVKKYSLIAVKEKLEKGNYRTFKVQAKKAYKEYKKGVYEINSELGALILKNFKELSVDVRNPDFVLGVEVRPEGVLIFTDRVECYGGLPVGTGGKAVLLLSGGIDSPVAGWYALKRGVLIESVTFVSPPFTSEGAVEKVRDILRVLREFSGGHPLRLHIVNLTKLQLEVKKRVPDKYSLIMYRRSMFRIAEKIAEETGAVAFYTGENIGQVASQTLENLWSIESVTTRPVIRPLSGFDKTEIVEKAKEIGTYEISIKPYQDSCVFFAPKNPATRSHPSILEKLEQQVPDLPVLEEEAFTSRKVEVIE</sequence>
<reference key="1">
    <citation type="journal article" date="1999" name="Nature">
        <title>Evidence for lateral gene transfer between Archaea and Bacteria from genome sequence of Thermotoga maritima.</title>
        <authorList>
            <person name="Nelson K.E."/>
            <person name="Clayton R.A."/>
            <person name="Gill S.R."/>
            <person name="Gwinn M.L."/>
            <person name="Dodson R.J."/>
            <person name="Haft D.H."/>
            <person name="Hickey E.K."/>
            <person name="Peterson J.D."/>
            <person name="Nelson W.C."/>
            <person name="Ketchum K.A."/>
            <person name="McDonald L.A."/>
            <person name="Utterback T.R."/>
            <person name="Malek J.A."/>
            <person name="Linher K.D."/>
            <person name="Garrett M.M."/>
            <person name="Stewart A.M."/>
            <person name="Cotton M.D."/>
            <person name="Pratt M.S."/>
            <person name="Phillips C.A."/>
            <person name="Richardson D.L."/>
            <person name="Heidelberg J.F."/>
            <person name="Sutton G.G."/>
            <person name="Fleischmann R.D."/>
            <person name="Eisen J.A."/>
            <person name="White O."/>
            <person name="Salzberg S.L."/>
            <person name="Smith H.O."/>
            <person name="Venter J.C."/>
            <person name="Fraser C.M."/>
        </authorList>
    </citation>
    <scope>NUCLEOTIDE SEQUENCE [LARGE SCALE GENOMIC DNA]</scope>
    <source>
        <strain>ATCC 43589 / DSM 3109 / JCM 10099 / NBRC 100826 / MSB8</strain>
    </source>
</reference>
<organism>
    <name type="scientific">Thermotoga maritima (strain ATCC 43589 / DSM 3109 / JCM 10099 / NBRC 100826 / MSB8)</name>
    <dbReference type="NCBI Taxonomy" id="243274"/>
    <lineage>
        <taxon>Bacteria</taxon>
        <taxon>Thermotogati</taxon>
        <taxon>Thermotogota</taxon>
        <taxon>Thermotogae</taxon>
        <taxon>Thermotogales</taxon>
        <taxon>Thermotogaceae</taxon>
        <taxon>Thermotoga</taxon>
    </lineage>
</organism>